<accession>A5WHX7</accession>
<proteinExistence type="inferred from homology"/>
<comment type="function">
    <text evidence="1">Accelerates the degradation of transcripts by removing pyrophosphate from the 5'-end of triphosphorylated RNA, leading to a more labile monophosphorylated state that can stimulate subsequent ribonuclease cleavage.</text>
</comment>
<comment type="cofactor">
    <cofactor evidence="1">
        <name>a divalent metal cation</name>
        <dbReference type="ChEBI" id="CHEBI:60240"/>
    </cofactor>
</comment>
<comment type="similarity">
    <text evidence="1">Belongs to the Nudix hydrolase family. RppH subfamily.</text>
</comment>
<name>RPPH_PSYWF</name>
<feature type="chain" id="PRO_1000078972" description="RNA pyrophosphohydrolase">
    <location>
        <begin position="1"/>
        <end position="173"/>
    </location>
</feature>
<feature type="domain" description="Nudix hydrolase" evidence="1">
    <location>
        <begin position="6"/>
        <end position="149"/>
    </location>
</feature>
<feature type="short sequence motif" description="Nudix box">
    <location>
        <begin position="38"/>
        <end position="59"/>
    </location>
</feature>
<sequence>MIDADGFRANVGIILANTQGQVLWAKRVGHDSWQFPQGGIDEGETPLDAMYRELWEEVGLYPRHVQLLAATDNWLRYRLPKRYIRHGQHPLCIGQKQKWFLLKLDEPNTEHIRFDTAKPEFDHWEWVSYWYPLGQVVHFKRGVYRRALRELARELPLKKELILPETKNHLLQV</sequence>
<organism>
    <name type="scientific">Psychrobacter sp. (strain PRwf-1)</name>
    <dbReference type="NCBI Taxonomy" id="349106"/>
    <lineage>
        <taxon>Bacteria</taxon>
        <taxon>Pseudomonadati</taxon>
        <taxon>Pseudomonadota</taxon>
        <taxon>Gammaproteobacteria</taxon>
        <taxon>Moraxellales</taxon>
        <taxon>Moraxellaceae</taxon>
        <taxon>Psychrobacter</taxon>
    </lineage>
</organism>
<dbReference type="EC" id="3.6.1.-" evidence="1"/>
<dbReference type="EMBL" id="CP000713">
    <property type="protein sequence ID" value="ABQ95268.1"/>
    <property type="molecule type" value="Genomic_DNA"/>
</dbReference>
<dbReference type="SMR" id="A5WHX7"/>
<dbReference type="STRING" id="349106.PsycPRwf_2328"/>
<dbReference type="KEGG" id="prw:PsycPRwf_2328"/>
<dbReference type="eggNOG" id="COG0494">
    <property type="taxonomic scope" value="Bacteria"/>
</dbReference>
<dbReference type="HOGENOM" id="CLU_087195_3_1_6"/>
<dbReference type="GO" id="GO:0016462">
    <property type="term" value="F:pyrophosphatase activity"/>
    <property type="evidence" value="ECO:0007669"/>
    <property type="project" value="UniProtKB-ARBA"/>
</dbReference>
<dbReference type="CDD" id="cd03671">
    <property type="entry name" value="NUDIX_Ap4A_hydrolase_plant_like"/>
    <property type="match status" value="1"/>
</dbReference>
<dbReference type="FunFam" id="3.90.79.10:FF:000001">
    <property type="entry name" value="RNA pyrophosphohydrolase"/>
    <property type="match status" value="1"/>
</dbReference>
<dbReference type="Gene3D" id="3.90.79.10">
    <property type="entry name" value="Nucleoside Triphosphate Pyrophosphohydrolase"/>
    <property type="match status" value="1"/>
</dbReference>
<dbReference type="HAMAP" id="MF_00298">
    <property type="entry name" value="Nudix_RppH"/>
    <property type="match status" value="1"/>
</dbReference>
<dbReference type="InterPro" id="IPR020476">
    <property type="entry name" value="Nudix_hydrolase"/>
</dbReference>
<dbReference type="InterPro" id="IPR015797">
    <property type="entry name" value="NUDIX_hydrolase-like_dom_sf"/>
</dbReference>
<dbReference type="InterPro" id="IPR020084">
    <property type="entry name" value="NUDIX_hydrolase_CS"/>
</dbReference>
<dbReference type="InterPro" id="IPR000086">
    <property type="entry name" value="NUDIX_hydrolase_dom"/>
</dbReference>
<dbReference type="InterPro" id="IPR022927">
    <property type="entry name" value="RppH"/>
</dbReference>
<dbReference type="NCBIfam" id="NF001934">
    <property type="entry name" value="PRK00714.1-1"/>
    <property type="match status" value="1"/>
</dbReference>
<dbReference type="NCBIfam" id="NF001937">
    <property type="entry name" value="PRK00714.1-4"/>
    <property type="match status" value="1"/>
</dbReference>
<dbReference type="NCBIfam" id="NF001938">
    <property type="entry name" value="PRK00714.1-5"/>
    <property type="match status" value="1"/>
</dbReference>
<dbReference type="PANTHER" id="PTHR43736">
    <property type="entry name" value="ADP-RIBOSE PYROPHOSPHATASE"/>
    <property type="match status" value="1"/>
</dbReference>
<dbReference type="PANTHER" id="PTHR43736:SF1">
    <property type="entry name" value="DIHYDRONEOPTERIN TRIPHOSPHATE DIPHOSPHATASE"/>
    <property type="match status" value="1"/>
</dbReference>
<dbReference type="Pfam" id="PF00293">
    <property type="entry name" value="NUDIX"/>
    <property type="match status" value="1"/>
</dbReference>
<dbReference type="PRINTS" id="PR00502">
    <property type="entry name" value="NUDIXFAMILY"/>
</dbReference>
<dbReference type="SUPFAM" id="SSF55811">
    <property type="entry name" value="Nudix"/>
    <property type="match status" value="1"/>
</dbReference>
<dbReference type="PROSITE" id="PS51462">
    <property type="entry name" value="NUDIX"/>
    <property type="match status" value="1"/>
</dbReference>
<dbReference type="PROSITE" id="PS00893">
    <property type="entry name" value="NUDIX_BOX"/>
    <property type="match status" value="1"/>
</dbReference>
<gene>
    <name evidence="1" type="primary">rppH</name>
    <name evidence="1" type="synonym">nudH</name>
    <name type="ordered locus">PsycPRwf_2328</name>
</gene>
<reference key="1">
    <citation type="submission" date="2007-05" db="EMBL/GenBank/DDBJ databases">
        <title>Complete sequence of chromosome of Psychrobacter sp. PRwf-1.</title>
        <authorList>
            <consortium name="US DOE Joint Genome Institute"/>
            <person name="Copeland A."/>
            <person name="Lucas S."/>
            <person name="Lapidus A."/>
            <person name="Barry K."/>
            <person name="Detter J.C."/>
            <person name="Glavina del Rio T."/>
            <person name="Hammon N."/>
            <person name="Israni S."/>
            <person name="Dalin E."/>
            <person name="Tice H."/>
            <person name="Pitluck S."/>
            <person name="Chain P."/>
            <person name="Malfatti S."/>
            <person name="Shin M."/>
            <person name="Vergez L."/>
            <person name="Schmutz J."/>
            <person name="Larimer F."/>
            <person name="Land M."/>
            <person name="Hauser L."/>
            <person name="Kyrpides N."/>
            <person name="Kim E."/>
            <person name="Tiedje J."/>
            <person name="Richardson P."/>
        </authorList>
    </citation>
    <scope>NUCLEOTIDE SEQUENCE [LARGE SCALE GENOMIC DNA]</scope>
    <source>
        <strain>PRwf-1</strain>
    </source>
</reference>
<evidence type="ECO:0000255" key="1">
    <source>
        <dbReference type="HAMAP-Rule" id="MF_00298"/>
    </source>
</evidence>
<keyword id="KW-0378">Hydrolase</keyword>
<protein>
    <recommendedName>
        <fullName evidence="1">RNA pyrophosphohydrolase</fullName>
        <ecNumber evidence="1">3.6.1.-</ecNumber>
    </recommendedName>
    <alternativeName>
        <fullName evidence="1">(Di)nucleoside polyphosphate hydrolase</fullName>
    </alternativeName>
</protein>